<keyword id="KW-0472">Membrane</keyword>
<keyword id="KW-0479">Metal-binding</keyword>
<keyword id="KW-0496">Mitochondrion</keyword>
<keyword id="KW-1000">Mitochondrion outer membrane</keyword>
<keyword id="KW-1185">Reference proteome</keyword>
<keyword id="KW-0808">Transferase</keyword>
<keyword id="KW-0812">Transmembrane</keyword>
<keyword id="KW-1133">Transmembrane helix</keyword>
<keyword id="KW-0832">Ubl conjugation</keyword>
<keyword id="KW-0833">Ubl conjugation pathway</keyword>
<keyword id="KW-0862">Zinc</keyword>
<keyword id="KW-0863">Zinc-finger</keyword>
<feature type="chain" id="PRO_0000271767" description="E3 ubiquitin-protein ligase MARCHF5">
    <location>
        <begin position="1"/>
        <end position="278"/>
    </location>
</feature>
<feature type="transmembrane region" description="Helical" evidence="4">
    <location>
        <begin position="99"/>
        <end position="119"/>
    </location>
</feature>
<feature type="transmembrane region" description="Helical" evidence="4">
    <location>
        <begin position="139"/>
        <end position="159"/>
    </location>
</feature>
<feature type="transmembrane region" description="Helical" evidence="4">
    <location>
        <begin position="209"/>
        <end position="229"/>
    </location>
</feature>
<feature type="transmembrane region" description="Helical" evidence="4">
    <location>
        <begin position="238"/>
        <end position="258"/>
    </location>
</feature>
<feature type="zinc finger region" description="RING-CH-type" evidence="5">
    <location>
        <begin position="6"/>
        <end position="75"/>
    </location>
</feature>
<feature type="binding site" evidence="5">
    <location>
        <position position="14"/>
    </location>
    <ligand>
        <name>Zn(2+)</name>
        <dbReference type="ChEBI" id="CHEBI:29105"/>
        <label>1</label>
    </ligand>
</feature>
<feature type="binding site" evidence="5">
    <location>
        <position position="17"/>
    </location>
    <ligand>
        <name>Zn(2+)</name>
        <dbReference type="ChEBI" id="CHEBI:29105"/>
        <label>1</label>
    </ligand>
</feature>
<feature type="binding site" evidence="5">
    <location>
        <position position="33"/>
    </location>
    <ligand>
        <name>Zn(2+)</name>
        <dbReference type="ChEBI" id="CHEBI:29105"/>
        <label>2</label>
    </ligand>
</feature>
<feature type="binding site" evidence="5">
    <location>
        <position position="35"/>
    </location>
    <ligand>
        <name>Zn(2+)</name>
        <dbReference type="ChEBI" id="CHEBI:29105"/>
        <label>2</label>
    </ligand>
</feature>
<feature type="binding site" evidence="5">
    <location>
        <position position="43"/>
    </location>
    <ligand>
        <name>Zn(2+)</name>
        <dbReference type="ChEBI" id="CHEBI:29105"/>
        <label>1</label>
    </ligand>
</feature>
<feature type="binding site" evidence="5">
    <location>
        <position position="46"/>
    </location>
    <ligand>
        <name>Zn(2+)</name>
        <dbReference type="ChEBI" id="CHEBI:29105"/>
        <label>1</label>
    </ligand>
</feature>
<feature type="binding site" evidence="5">
    <location>
        <position position="65"/>
    </location>
    <ligand>
        <name>Zn(2+)</name>
        <dbReference type="ChEBI" id="CHEBI:29105"/>
        <label>2</label>
    </ligand>
</feature>
<feature type="binding site" evidence="5">
    <location>
        <position position="68"/>
    </location>
    <ligand>
        <name>Zn(2+)</name>
        <dbReference type="ChEBI" id="CHEBI:29105"/>
        <label>2</label>
    </ligand>
</feature>
<reference key="1">
    <citation type="submission" date="2005-08" db="EMBL/GenBank/DDBJ databases">
        <authorList>
            <consortium name="NIH - Mammalian Gene Collection (MGC) project"/>
        </authorList>
    </citation>
    <scope>NUCLEOTIDE SEQUENCE [LARGE SCALE MRNA]</scope>
    <source>
        <strain>Crossbred X Angus</strain>
        <tissue>Ileum</tissue>
    </source>
</reference>
<name>MARH5_BOVIN</name>
<gene>
    <name type="primary">MARCHF5</name>
    <name type="synonym">MARCH5</name>
</gene>
<accession>Q3ZC24</accession>
<proteinExistence type="evidence at transcript level"/>
<sequence>MPDQALQQMLDRSCWVCFATDEDDRTAEWVRPCRCRGSTKWVHQACLQRWVDEKQRGNSTARVACPQCNAEYLIVFPKLGPVVYVLDLADRLISKACPFAAAGIMVGSIYWTAVTYGAVTVMQVVGHKEGLDVMERADPLFLLIGLPTIPVMLILGKMIRWEDYVLRLWRKYSNKLQILNSIFPGIGCPVPRIPAEANPLADHVSATRILCGALVFPTIATIVGKLMFSSVNSNLQRTILGGIAFVAIKGAFKVYFKQQQYLRQAHRKILNYPEQEEA</sequence>
<comment type="function">
    <text evidence="2 3">Mitochondrial E3 ubiquitin-protein ligase that plays a crucial role in the control of mitochondrial morphology by acting as a positive regulator of mitochondrial fission and as an important regulator of immune response. Plays a crucial role in maintaining mitochondrial homeostasis by regulating the dynamics of mitochondria through the ubiquitination of key proteins involved in fission and fusion such as FIS1, DNM1L and MFN1 (By similarity). Acts as a critical determinant of mitotic apoptosis through both MCL1-dependent and -independent pathways (By similarity). Turns off persistent immune signaling by degrading oligomeric complexes of retinoic acid-inducible gene I/DDX58 and mitochondrial antiviral-signaling protein/MAVS formed upon RNA virus infection. Promotes STING-mediated type-I interferon production via 'Lys-63'-linked ubiquitination of STING1 thereby preserving its activity and preventing the formation of inactive STING1 polymers. Plays also an essential role in the formation of PEX3-containing vesicles in the de novo biogenesis of peroxisomes from mitochondria. Acts as a regulator of NLRP3 inflammasome activation on the mitochondria by mediating the 'Lys-27'-linked polyubiquitination of NLRP3, positively regulating the NLRP3-NEK7 complex formation and NLRP3 oligomerization (By similarity).</text>
</comment>
<comment type="catalytic activity">
    <reaction evidence="3">
        <text>S-ubiquitinyl-[E2 ubiquitin-conjugating enzyme]-L-cysteine + [acceptor protein]-L-lysine = [E2 ubiquitin-conjugating enzyme]-L-cysteine + N(6)-ubiquitinyl-[acceptor protein]-L-lysine.</text>
        <dbReference type="EC" id="2.3.2.27"/>
    </reaction>
</comment>
<comment type="pathway">
    <text>Protein modification; protein ubiquitination.</text>
</comment>
<comment type="subunit">
    <text evidence="3">Monomer and homodimer. Interacts with MFN1, MFN2, DNM1L and FIS1.</text>
</comment>
<comment type="subcellular location">
    <subcellularLocation>
        <location evidence="3">Mitochondrion outer membrane</location>
        <topology evidence="1">Multi-pass membrane protein</topology>
    </subcellularLocation>
</comment>
<comment type="domain">
    <text evidence="5">The RING-CH-type zinc finger domain is required for E3 ligase activity.</text>
</comment>
<comment type="PTM">
    <text evidence="3">Autoubiquitinated leading to degradation (short half-life).</text>
</comment>
<dbReference type="EC" id="2.3.2.27"/>
<dbReference type="EMBL" id="BC102966">
    <property type="protein sequence ID" value="AAI02967.1"/>
    <property type="molecule type" value="mRNA"/>
</dbReference>
<dbReference type="RefSeq" id="NP_001029887.1">
    <property type="nucleotide sequence ID" value="NM_001034715.2"/>
</dbReference>
<dbReference type="FunCoup" id="Q3ZC24">
    <property type="interactions" value="2126"/>
</dbReference>
<dbReference type="STRING" id="9913.ENSBTAP00000027942"/>
<dbReference type="PaxDb" id="9913-ENSBTAP00000027942"/>
<dbReference type="Ensembl" id="ENSBTAT00000027942.6">
    <property type="protein sequence ID" value="ENSBTAP00000027942.6"/>
    <property type="gene ID" value="ENSBTAG00000020981.7"/>
</dbReference>
<dbReference type="GeneID" id="540937"/>
<dbReference type="KEGG" id="bta:540937"/>
<dbReference type="CTD" id="54708"/>
<dbReference type="VEuPathDB" id="HostDB:ENSBTAG00000020981"/>
<dbReference type="VGNC" id="VGNC:31240">
    <property type="gene designation" value="MARCHF5"/>
</dbReference>
<dbReference type="eggNOG" id="KOG3053">
    <property type="taxonomic scope" value="Eukaryota"/>
</dbReference>
<dbReference type="GeneTree" id="ENSGT00390000009948"/>
<dbReference type="HOGENOM" id="CLU_046472_1_1_1"/>
<dbReference type="InParanoid" id="Q3ZC24"/>
<dbReference type="OMA" id="KRYCWVC"/>
<dbReference type="OrthoDB" id="5817083at2759"/>
<dbReference type="UniPathway" id="UPA00143"/>
<dbReference type="Proteomes" id="UP000009136">
    <property type="component" value="Chromosome 26"/>
</dbReference>
<dbReference type="Bgee" id="ENSBTAG00000020981">
    <property type="expression patterns" value="Expressed in semitendinosus and 105 other cell types or tissues"/>
</dbReference>
<dbReference type="GO" id="GO:0005783">
    <property type="term" value="C:endoplasmic reticulum"/>
    <property type="evidence" value="ECO:0000250"/>
    <property type="project" value="UniProtKB"/>
</dbReference>
<dbReference type="GO" id="GO:0005789">
    <property type="term" value="C:endoplasmic reticulum membrane"/>
    <property type="evidence" value="ECO:0007669"/>
    <property type="project" value="Ensembl"/>
</dbReference>
<dbReference type="GO" id="GO:0005741">
    <property type="term" value="C:mitochondrial outer membrane"/>
    <property type="evidence" value="ECO:0000250"/>
    <property type="project" value="UniProtKB"/>
</dbReference>
<dbReference type="GO" id="GO:0051020">
    <property type="term" value="F:GTPase binding"/>
    <property type="evidence" value="ECO:0007669"/>
    <property type="project" value="Ensembl"/>
</dbReference>
<dbReference type="GO" id="GO:0061630">
    <property type="term" value="F:ubiquitin protein ligase activity"/>
    <property type="evidence" value="ECO:0000250"/>
    <property type="project" value="UniProtKB"/>
</dbReference>
<dbReference type="GO" id="GO:0008270">
    <property type="term" value="F:zinc ion binding"/>
    <property type="evidence" value="ECO:0007669"/>
    <property type="project" value="UniProtKB-KW"/>
</dbReference>
<dbReference type="GO" id="GO:0039532">
    <property type="term" value="P:negative regulation of cytoplasmic pattern recognition receptor signaling pathway"/>
    <property type="evidence" value="ECO:0007669"/>
    <property type="project" value="Ensembl"/>
</dbReference>
<dbReference type="GO" id="GO:0141111">
    <property type="term" value="P:positive regulation of cGAS/STING signaling pathway"/>
    <property type="evidence" value="ECO:0007669"/>
    <property type="project" value="Ensembl"/>
</dbReference>
<dbReference type="GO" id="GO:0090141">
    <property type="term" value="P:positive regulation of mitochondrial fission"/>
    <property type="evidence" value="ECO:0007669"/>
    <property type="project" value="Ensembl"/>
</dbReference>
<dbReference type="GO" id="GO:1900227">
    <property type="term" value="P:positive regulation of NLRP3 inflammasome complex assembly"/>
    <property type="evidence" value="ECO:0007669"/>
    <property type="project" value="Ensembl"/>
</dbReference>
<dbReference type="GO" id="GO:0051865">
    <property type="term" value="P:protein autoubiquitination"/>
    <property type="evidence" value="ECO:0000250"/>
    <property type="project" value="UniProtKB"/>
</dbReference>
<dbReference type="GO" id="GO:0044314">
    <property type="term" value="P:protein K27-linked ubiquitination"/>
    <property type="evidence" value="ECO:0007669"/>
    <property type="project" value="Ensembl"/>
</dbReference>
<dbReference type="GO" id="GO:0070936">
    <property type="term" value="P:protein K48-linked ubiquitination"/>
    <property type="evidence" value="ECO:0007669"/>
    <property type="project" value="Ensembl"/>
</dbReference>
<dbReference type="GO" id="GO:0070534">
    <property type="term" value="P:protein K63-linked ubiquitination"/>
    <property type="evidence" value="ECO:0007669"/>
    <property type="project" value="Ensembl"/>
</dbReference>
<dbReference type="GO" id="GO:0070585">
    <property type="term" value="P:protein localization to mitochondrion"/>
    <property type="evidence" value="ECO:0007669"/>
    <property type="project" value="Ensembl"/>
</dbReference>
<dbReference type="GO" id="GO:0000209">
    <property type="term" value="P:protein polyubiquitination"/>
    <property type="evidence" value="ECO:0000318"/>
    <property type="project" value="GO_Central"/>
</dbReference>
<dbReference type="GO" id="GO:0090140">
    <property type="term" value="P:regulation of mitochondrial fission"/>
    <property type="evidence" value="ECO:0000250"/>
    <property type="project" value="UniProtKB"/>
</dbReference>
<dbReference type="CDD" id="cd16701">
    <property type="entry name" value="RING_CH-C4HC3_MARCH5"/>
    <property type="match status" value="1"/>
</dbReference>
<dbReference type="FunFam" id="3.30.40.10:FF:000262">
    <property type="entry name" value="E3 ubiquitin-protein ligase MARCH5"/>
    <property type="match status" value="1"/>
</dbReference>
<dbReference type="Gene3D" id="3.30.40.10">
    <property type="entry name" value="Zinc/RING finger domain, C3HC4 (zinc finger)"/>
    <property type="match status" value="1"/>
</dbReference>
<dbReference type="InterPro" id="IPR011016">
    <property type="entry name" value="Znf_RING-CH"/>
</dbReference>
<dbReference type="InterPro" id="IPR013083">
    <property type="entry name" value="Znf_RING/FYVE/PHD"/>
</dbReference>
<dbReference type="PANTHER" id="PTHR46283">
    <property type="entry name" value="E3 UBIQUITIN-PROTEIN LIGASE MARCH5"/>
    <property type="match status" value="1"/>
</dbReference>
<dbReference type="Pfam" id="PF12906">
    <property type="entry name" value="RINGv"/>
    <property type="match status" value="1"/>
</dbReference>
<dbReference type="SMART" id="SM00744">
    <property type="entry name" value="RINGv"/>
    <property type="match status" value="1"/>
</dbReference>
<dbReference type="SUPFAM" id="SSF57850">
    <property type="entry name" value="RING/U-box"/>
    <property type="match status" value="1"/>
</dbReference>
<dbReference type="PROSITE" id="PS51292">
    <property type="entry name" value="ZF_RING_CH"/>
    <property type="match status" value="1"/>
</dbReference>
<protein>
    <recommendedName>
        <fullName>E3 ubiquitin-protein ligase MARCHF5</fullName>
        <ecNumber>2.3.2.27</ecNumber>
    </recommendedName>
    <alternativeName>
        <fullName>Membrane-associated RING finger protein 5</fullName>
    </alternativeName>
    <alternativeName>
        <fullName>Membrane-associated RING-CH protein V</fullName>
        <shortName>MARCH-V</shortName>
    </alternativeName>
    <alternativeName>
        <fullName evidence="6">RING-type E3 ubiquitin transferase MARCHF5</fullName>
    </alternativeName>
</protein>
<organism>
    <name type="scientific">Bos taurus</name>
    <name type="common">Bovine</name>
    <dbReference type="NCBI Taxonomy" id="9913"/>
    <lineage>
        <taxon>Eukaryota</taxon>
        <taxon>Metazoa</taxon>
        <taxon>Chordata</taxon>
        <taxon>Craniata</taxon>
        <taxon>Vertebrata</taxon>
        <taxon>Euteleostomi</taxon>
        <taxon>Mammalia</taxon>
        <taxon>Eutheria</taxon>
        <taxon>Laurasiatheria</taxon>
        <taxon>Artiodactyla</taxon>
        <taxon>Ruminantia</taxon>
        <taxon>Pecora</taxon>
        <taxon>Bovidae</taxon>
        <taxon>Bovinae</taxon>
        <taxon>Bos</taxon>
    </lineage>
</organism>
<evidence type="ECO:0000250" key="1"/>
<evidence type="ECO:0000250" key="2">
    <source>
        <dbReference type="UniProtKB" id="Q3KNM2"/>
    </source>
</evidence>
<evidence type="ECO:0000250" key="3">
    <source>
        <dbReference type="UniProtKB" id="Q9NX47"/>
    </source>
</evidence>
<evidence type="ECO:0000255" key="4"/>
<evidence type="ECO:0000255" key="5">
    <source>
        <dbReference type="PROSITE-ProRule" id="PRU00623"/>
    </source>
</evidence>
<evidence type="ECO:0000305" key="6"/>